<keyword id="KW-0963">Cytoplasm</keyword>
<keyword id="KW-0233">DNA recombination</keyword>
<protein>
    <recommendedName>
        <fullName evidence="1">Recombination-associated protein RdgC</fullName>
    </recommendedName>
</protein>
<accession>B7N8U5</accession>
<gene>
    <name evidence="1" type="primary">rdgC</name>
    <name type="ordered locus">ECUMN_0431</name>
</gene>
<evidence type="ECO:0000255" key="1">
    <source>
        <dbReference type="HAMAP-Rule" id="MF_00194"/>
    </source>
</evidence>
<organism>
    <name type="scientific">Escherichia coli O17:K52:H18 (strain UMN026 / ExPEC)</name>
    <dbReference type="NCBI Taxonomy" id="585056"/>
    <lineage>
        <taxon>Bacteria</taxon>
        <taxon>Pseudomonadati</taxon>
        <taxon>Pseudomonadota</taxon>
        <taxon>Gammaproteobacteria</taxon>
        <taxon>Enterobacterales</taxon>
        <taxon>Enterobacteriaceae</taxon>
        <taxon>Escherichia</taxon>
    </lineage>
</organism>
<dbReference type="EMBL" id="CU928163">
    <property type="protein sequence ID" value="CAR11646.1"/>
    <property type="molecule type" value="Genomic_DNA"/>
</dbReference>
<dbReference type="RefSeq" id="WP_001298537.1">
    <property type="nucleotide sequence ID" value="NC_011751.1"/>
</dbReference>
<dbReference type="RefSeq" id="YP_002411194.1">
    <property type="nucleotide sequence ID" value="NC_011751.1"/>
</dbReference>
<dbReference type="SMR" id="B7N8U5"/>
<dbReference type="STRING" id="585056.ECUMN_0431"/>
<dbReference type="GeneID" id="75202816"/>
<dbReference type="KEGG" id="eum:ECUMN_0431"/>
<dbReference type="PATRIC" id="fig|585056.7.peg.631"/>
<dbReference type="HOGENOM" id="CLU_052038_1_1_6"/>
<dbReference type="Proteomes" id="UP000007097">
    <property type="component" value="Chromosome"/>
</dbReference>
<dbReference type="GO" id="GO:0043590">
    <property type="term" value="C:bacterial nucleoid"/>
    <property type="evidence" value="ECO:0007669"/>
    <property type="project" value="TreeGrafter"/>
</dbReference>
<dbReference type="GO" id="GO:0005737">
    <property type="term" value="C:cytoplasm"/>
    <property type="evidence" value="ECO:0007669"/>
    <property type="project" value="UniProtKB-UniRule"/>
</dbReference>
<dbReference type="GO" id="GO:0003690">
    <property type="term" value="F:double-stranded DNA binding"/>
    <property type="evidence" value="ECO:0007669"/>
    <property type="project" value="TreeGrafter"/>
</dbReference>
<dbReference type="GO" id="GO:0006310">
    <property type="term" value="P:DNA recombination"/>
    <property type="evidence" value="ECO:0007669"/>
    <property type="project" value="UniProtKB-UniRule"/>
</dbReference>
<dbReference type="GO" id="GO:0000018">
    <property type="term" value="P:regulation of DNA recombination"/>
    <property type="evidence" value="ECO:0007669"/>
    <property type="project" value="TreeGrafter"/>
</dbReference>
<dbReference type="HAMAP" id="MF_00194">
    <property type="entry name" value="RdgC"/>
    <property type="match status" value="1"/>
</dbReference>
<dbReference type="InterPro" id="IPR007476">
    <property type="entry name" value="RdgC"/>
</dbReference>
<dbReference type="NCBIfam" id="NF001460">
    <property type="entry name" value="PRK00321.1-1"/>
    <property type="match status" value="1"/>
</dbReference>
<dbReference type="NCBIfam" id="NF001462">
    <property type="entry name" value="PRK00321.1-3"/>
    <property type="match status" value="1"/>
</dbReference>
<dbReference type="NCBIfam" id="NF001464">
    <property type="entry name" value="PRK00321.1-5"/>
    <property type="match status" value="1"/>
</dbReference>
<dbReference type="PANTHER" id="PTHR38103">
    <property type="entry name" value="RECOMBINATION-ASSOCIATED PROTEIN RDGC"/>
    <property type="match status" value="1"/>
</dbReference>
<dbReference type="PANTHER" id="PTHR38103:SF1">
    <property type="entry name" value="RECOMBINATION-ASSOCIATED PROTEIN RDGC"/>
    <property type="match status" value="1"/>
</dbReference>
<dbReference type="Pfam" id="PF04381">
    <property type="entry name" value="RdgC"/>
    <property type="match status" value="1"/>
</dbReference>
<feature type="chain" id="PRO_1000118629" description="Recombination-associated protein RdgC">
    <location>
        <begin position="1"/>
        <end position="303"/>
    </location>
</feature>
<reference key="1">
    <citation type="journal article" date="2009" name="PLoS Genet.">
        <title>Organised genome dynamics in the Escherichia coli species results in highly diverse adaptive paths.</title>
        <authorList>
            <person name="Touchon M."/>
            <person name="Hoede C."/>
            <person name="Tenaillon O."/>
            <person name="Barbe V."/>
            <person name="Baeriswyl S."/>
            <person name="Bidet P."/>
            <person name="Bingen E."/>
            <person name="Bonacorsi S."/>
            <person name="Bouchier C."/>
            <person name="Bouvet O."/>
            <person name="Calteau A."/>
            <person name="Chiapello H."/>
            <person name="Clermont O."/>
            <person name="Cruveiller S."/>
            <person name="Danchin A."/>
            <person name="Diard M."/>
            <person name="Dossat C."/>
            <person name="Karoui M.E."/>
            <person name="Frapy E."/>
            <person name="Garry L."/>
            <person name="Ghigo J.M."/>
            <person name="Gilles A.M."/>
            <person name="Johnson J."/>
            <person name="Le Bouguenec C."/>
            <person name="Lescat M."/>
            <person name="Mangenot S."/>
            <person name="Martinez-Jehanne V."/>
            <person name="Matic I."/>
            <person name="Nassif X."/>
            <person name="Oztas S."/>
            <person name="Petit M.A."/>
            <person name="Pichon C."/>
            <person name="Rouy Z."/>
            <person name="Ruf C.S."/>
            <person name="Schneider D."/>
            <person name="Tourret J."/>
            <person name="Vacherie B."/>
            <person name="Vallenet D."/>
            <person name="Medigue C."/>
            <person name="Rocha E.P.C."/>
            <person name="Denamur E."/>
        </authorList>
    </citation>
    <scope>NUCLEOTIDE SEQUENCE [LARGE SCALE GENOMIC DNA]</scope>
    <source>
        <strain>UMN026 / ExPEC</strain>
    </source>
</reference>
<name>RDGC_ECOLU</name>
<comment type="function">
    <text evidence="1">May be involved in recombination.</text>
</comment>
<comment type="subcellular location">
    <subcellularLocation>
        <location evidence="1">Cytoplasm</location>
        <location evidence="1">Nucleoid</location>
    </subcellularLocation>
</comment>
<comment type="similarity">
    <text evidence="1">Belongs to the RdgC family.</text>
</comment>
<sequence length="303" mass="33993">MLWFKNLMVYRLSREISLRAEEMEKQLASMAFTPCGSQDMAKMGWVPPMGSHSDALTHVANGQIVICARKEEKILPSPVIKQALEAKIAKLEAEQARKLKKTEKDSLKDEVLHSLLPRAFSRFSQTMMWIDTVNGLIMVDCASAKKAEDTLALLRKSLGSLPVVPLSMENPIELTLTEWVRSGSAAQGFQLLDEAELKSLLEDGGVIRAKKQDLTSEEITNHIEAGKVVTKLALDWQQRIQFVMCDDGSLKRLKFCDELRDQNEDIDREDFAQRFDADFILMTGELAALIQNLIEGLGGEAQR</sequence>
<proteinExistence type="inferred from homology"/>